<proteinExistence type="evidence at protein level"/>
<comment type="subcellular location">
    <subcellularLocation>
        <location evidence="1">Plastid</location>
        <location evidence="1">Chloroplast thylakoid membrane</location>
        <topology evidence="1">Multi-pass membrane protein</topology>
    </subcellularLocation>
</comment>
<comment type="similarity">
    <text evidence="1">Belongs to the PsaL family.</text>
</comment>
<evidence type="ECO:0000255" key="1">
    <source>
        <dbReference type="HAMAP-Rule" id="MF_00447"/>
    </source>
</evidence>
<evidence type="ECO:0007829" key="2">
    <source>
        <dbReference type="PDB" id="7BLZ"/>
    </source>
</evidence>
<organism>
    <name type="scientific">Cyanidioschyzon merolae (strain NIES-3377 / 10D)</name>
    <name type="common">Unicellular red alga</name>
    <dbReference type="NCBI Taxonomy" id="280699"/>
    <lineage>
        <taxon>Eukaryota</taxon>
        <taxon>Rhodophyta</taxon>
        <taxon>Bangiophyceae</taxon>
        <taxon>Cyanidiales</taxon>
        <taxon>Cyanidiaceae</taxon>
        <taxon>Cyanidioschyzon</taxon>
    </lineage>
</organism>
<geneLocation type="chloroplast"/>
<feature type="chain" id="PRO_0000194687" description="Photosystem I reaction center subunit XI">
    <location>
        <begin position="1"/>
        <end position="140"/>
    </location>
</feature>
<feature type="transmembrane region" description="Helical" evidence="1">
    <location>
        <begin position="48"/>
        <end position="68"/>
    </location>
</feature>
<feature type="transmembrane region" description="Helical" evidence="1">
    <location>
        <begin position="79"/>
        <end position="99"/>
    </location>
</feature>
<feature type="transmembrane region" description="Helical" evidence="1">
    <location>
        <begin position="119"/>
        <end position="139"/>
    </location>
</feature>
<feature type="turn" evidence="2">
    <location>
        <begin position="20"/>
        <end position="22"/>
    </location>
</feature>
<feature type="helix" evidence="2">
    <location>
        <begin position="25"/>
        <end position="31"/>
    </location>
</feature>
<feature type="turn" evidence="2">
    <location>
        <begin position="35"/>
        <end position="37"/>
    </location>
</feature>
<feature type="helix" evidence="2">
    <location>
        <begin position="43"/>
        <end position="65"/>
    </location>
</feature>
<feature type="strand" evidence="2">
    <location>
        <begin position="69"/>
        <end position="71"/>
    </location>
</feature>
<feature type="helix" evidence="2">
    <location>
        <begin position="74"/>
        <end position="100"/>
    </location>
</feature>
<feature type="strand" evidence="2">
    <location>
        <begin position="106"/>
        <end position="110"/>
    </location>
</feature>
<feature type="helix" evidence="2">
    <location>
        <begin position="111"/>
        <end position="137"/>
    </location>
</feature>
<accession>Q85FP8</accession>
<reference key="1">
    <citation type="journal article" date="2003" name="DNA Res.">
        <title>Complete sequence and analysis of the plastid genome of the unicellular red alga Cyanidioschyzon merolae.</title>
        <authorList>
            <person name="Ohta N."/>
            <person name="Matsuzaki M."/>
            <person name="Misumi O."/>
            <person name="Miyagishima S.-Y."/>
            <person name="Nozaki H."/>
            <person name="Tanaka K."/>
            <person name="Shin-i T."/>
            <person name="Kohara Y."/>
            <person name="Kuroiwa T."/>
        </authorList>
    </citation>
    <scope>NUCLEOTIDE SEQUENCE [LARGE SCALE GENOMIC DNA]</scope>
    <source>
        <strain>NIES-3377 / 10D</strain>
    </source>
</reference>
<sequence>MTDYIKPYNNDPFVGHLATPINSSSLTRAYLSQLPIYRRGVSPFLRGLEIGMAHGYFLIGPFVQLGPLRNTDIKYLAGLLSAIGLIVILTLGMLLYGAVSFTNDSQDLESVDGWRQLASGFLLGAVGGAGFAYLLLTLFS</sequence>
<gene>
    <name evidence="1" type="primary">psaL</name>
</gene>
<keyword id="KW-0002">3D-structure</keyword>
<keyword id="KW-0150">Chloroplast</keyword>
<keyword id="KW-0472">Membrane</keyword>
<keyword id="KW-0602">Photosynthesis</keyword>
<keyword id="KW-0603">Photosystem I</keyword>
<keyword id="KW-0934">Plastid</keyword>
<keyword id="KW-1185">Reference proteome</keyword>
<keyword id="KW-0793">Thylakoid</keyword>
<keyword id="KW-0812">Transmembrane</keyword>
<keyword id="KW-1133">Transmembrane helix</keyword>
<name>PSAL_CYAM1</name>
<dbReference type="EMBL" id="AB002583">
    <property type="protein sequence ID" value="BAC76297.1"/>
    <property type="molecule type" value="Genomic_DNA"/>
</dbReference>
<dbReference type="RefSeq" id="NP_849135.1">
    <property type="nucleotide sequence ID" value="NC_004799.1"/>
</dbReference>
<dbReference type="PDB" id="5ZGB">
    <property type="method" value="EM"/>
    <property type="resolution" value="3.63 A"/>
    <property type="chains" value="L=1-140"/>
</dbReference>
<dbReference type="PDB" id="5ZGH">
    <property type="method" value="EM"/>
    <property type="resolution" value="3.82 A"/>
    <property type="chains" value="L=1-140"/>
</dbReference>
<dbReference type="PDB" id="6FOS">
    <property type="method" value="X-ray"/>
    <property type="resolution" value="4.00 A"/>
    <property type="chains" value="L=1-140"/>
</dbReference>
<dbReference type="PDB" id="7BLZ">
    <property type="method" value="EM"/>
    <property type="resolution" value="3.10 A"/>
    <property type="chains" value="L=3-138"/>
</dbReference>
<dbReference type="PDBsum" id="5ZGB"/>
<dbReference type="PDBsum" id="5ZGH"/>
<dbReference type="PDBsum" id="6FOS"/>
<dbReference type="PDBsum" id="7BLZ"/>
<dbReference type="EMDB" id="EMD-12228"/>
<dbReference type="EMDB" id="EMD-6929"/>
<dbReference type="SMR" id="Q85FP8"/>
<dbReference type="STRING" id="280699.Q85FP8"/>
<dbReference type="EnsemblPlants" id="CMV236CT">
    <property type="protein sequence ID" value="CMV236CT"/>
    <property type="gene ID" value="CMV236C"/>
</dbReference>
<dbReference type="GeneID" id="844944"/>
<dbReference type="Gramene" id="CMV236CT">
    <property type="protein sequence ID" value="CMV236CT"/>
    <property type="gene ID" value="CMV236C"/>
</dbReference>
<dbReference type="KEGG" id="cme:CymeCp203"/>
<dbReference type="eggNOG" id="ENOG502QVFH">
    <property type="taxonomic scope" value="Eukaryota"/>
</dbReference>
<dbReference type="HOGENOM" id="CLU_092204_1_0_1"/>
<dbReference type="Proteomes" id="UP000007014">
    <property type="component" value="Chloroplast"/>
</dbReference>
<dbReference type="GO" id="GO:0009535">
    <property type="term" value="C:chloroplast thylakoid membrane"/>
    <property type="evidence" value="ECO:0007669"/>
    <property type="project" value="UniProtKB-SubCell"/>
</dbReference>
<dbReference type="GO" id="GO:0009538">
    <property type="term" value="C:photosystem I reaction center"/>
    <property type="evidence" value="ECO:0007669"/>
    <property type="project" value="InterPro"/>
</dbReference>
<dbReference type="GO" id="GO:0015979">
    <property type="term" value="P:photosynthesis"/>
    <property type="evidence" value="ECO:0007669"/>
    <property type="project" value="UniProtKB-UniRule"/>
</dbReference>
<dbReference type="Gene3D" id="1.20.1240.10">
    <property type="entry name" value="Photosystem I PsaL, reaction centre subunit XI"/>
    <property type="match status" value="1"/>
</dbReference>
<dbReference type="HAMAP" id="MF_00447">
    <property type="entry name" value="PSI_PsaL"/>
    <property type="match status" value="1"/>
</dbReference>
<dbReference type="InterPro" id="IPR003757">
    <property type="entry name" value="PSI_PsaL"/>
</dbReference>
<dbReference type="InterPro" id="IPR036592">
    <property type="entry name" value="PSI_PsaL_sf"/>
</dbReference>
<dbReference type="InterPro" id="IPR022980">
    <property type="entry name" value="PSI_suXI"/>
</dbReference>
<dbReference type="PANTHER" id="PTHR34803">
    <property type="entry name" value="PHOTOSYSTEM I REACTION CENTER SUBUNIT XI, CHLOROPLASTIC"/>
    <property type="match status" value="1"/>
</dbReference>
<dbReference type="PANTHER" id="PTHR34803:SF2">
    <property type="entry name" value="PHOTOSYSTEM I REACTION CENTER SUBUNIT XI, CHLOROPLASTIC"/>
    <property type="match status" value="1"/>
</dbReference>
<dbReference type="Pfam" id="PF02605">
    <property type="entry name" value="PsaL"/>
    <property type="match status" value="1"/>
</dbReference>
<dbReference type="SUPFAM" id="SSF81568">
    <property type="entry name" value="Photosystem I reaction center subunit XI, PsaL"/>
    <property type="match status" value="1"/>
</dbReference>
<protein>
    <recommendedName>
        <fullName evidence="1">Photosystem I reaction center subunit XI</fullName>
    </recommendedName>
    <alternativeName>
        <fullName evidence="1">PSI subunit V</fullName>
    </alternativeName>
    <alternativeName>
        <fullName evidence="1">PSI-L</fullName>
    </alternativeName>
</protein>